<name>GLMM_PSESM</name>
<organism>
    <name type="scientific">Pseudomonas syringae pv. tomato (strain ATCC BAA-871 / DC3000)</name>
    <dbReference type="NCBI Taxonomy" id="223283"/>
    <lineage>
        <taxon>Bacteria</taxon>
        <taxon>Pseudomonadati</taxon>
        <taxon>Pseudomonadota</taxon>
        <taxon>Gammaproteobacteria</taxon>
        <taxon>Pseudomonadales</taxon>
        <taxon>Pseudomonadaceae</taxon>
        <taxon>Pseudomonas</taxon>
    </lineage>
</organism>
<proteinExistence type="inferred from homology"/>
<reference key="1">
    <citation type="journal article" date="2003" name="Proc. Natl. Acad. Sci. U.S.A.">
        <title>The complete genome sequence of the Arabidopsis and tomato pathogen Pseudomonas syringae pv. tomato DC3000.</title>
        <authorList>
            <person name="Buell C.R."/>
            <person name="Joardar V."/>
            <person name="Lindeberg M."/>
            <person name="Selengut J."/>
            <person name="Paulsen I.T."/>
            <person name="Gwinn M.L."/>
            <person name="Dodson R.J."/>
            <person name="DeBoy R.T."/>
            <person name="Durkin A.S."/>
            <person name="Kolonay J.F."/>
            <person name="Madupu R."/>
            <person name="Daugherty S.C."/>
            <person name="Brinkac L.M."/>
            <person name="Beanan M.J."/>
            <person name="Haft D.H."/>
            <person name="Nelson W.C."/>
            <person name="Davidsen T.M."/>
            <person name="Zafar N."/>
            <person name="Zhou L."/>
            <person name="Liu J."/>
            <person name="Yuan Q."/>
            <person name="Khouri H.M."/>
            <person name="Fedorova N.B."/>
            <person name="Tran B."/>
            <person name="Russell D."/>
            <person name="Berry K.J."/>
            <person name="Utterback T.R."/>
            <person name="Van Aken S.E."/>
            <person name="Feldblyum T.V."/>
            <person name="D'Ascenzo M."/>
            <person name="Deng W.-L."/>
            <person name="Ramos A.R."/>
            <person name="Alfano J.R."/>
            <person name="Cartinhour S."/>
            <person name="Chatterjee A.K."/>
            <person name="Delaney T.P."/>
            <person name="Lazarowitz S.G."/>
            <person name="Martin G.B."/>
            <person name="Schneider D.J."/>
            <person name="Tang X."/>
            <person name="Bender C.L."/>
            <person name="White O."/>
            <person name="Fraser C.M."/>
            <person name="Collmer A."/>
        </authorList>
    </citation>
    <scope>NUCLEOTIDE SEQUENCE [LARGE SCALE GENOMIC DNA]</scope>
    <source>
        <strain>ATCC BAA-871 / DC3000</strain>
    </source>
</reference>
<protein>
    <recommendedName>
        <fullName evidence="1">Phosphoglucosamine mutase</fullName>
        <ecNumber evidence="1">5.4.2.10</ecNumber>
    </recommendedName>
</protein>
<dbReference type="EC" id="5.4.2.10" evidence="1"/>
<dbReference type="EMBL" id="AE016853">
    <property type="protein sequence ID" value="AAO57943.1"/>
    <property type="molecule type" value="Genomic_DNA"/>
</dbReference>
<dbReference type="RefSeq" id="NP_794248.1">
    <property type="nucleotide sequence ID" value="NC_004578.1"/>
</dbReference>
<dbReference type="RefSeq" id="WP_005766449.1">
    <property type="nucleotide sequence ID" value="NC_004578.1"/>
</dbReference>
<dbReference type="SMR" id="Q87WQ0"/>
<dbReference type="STRING" id="223283.PSPTO_4495"/>
<dbReference type="GeneID" id="61789771"/>
<dbReference type="KEGG" id="pst:PSPTO_4495"/>
<dbReference type="PATRIC" id="fig|223283.9.peg.4611"/>
<dbReference type="eggNOG" id="COG1109">
    <property type="taxonomic scope" value="Bacteria"/>
</dbReference>
<dbReference type="HOGENOM" id="CLU_016950_7_0_6"/>
<dbReference type="OrthoDB" id="9803322at2"/>
<dbReference type="PhylomeDB" id="Q87WQ0"/>
<dbReference type="Proteomes" id="UP000002515">
    <property type="component" value="Chromosome"/>
</dbReference>
<dbReference type="GO" id="GO:0005829">
    <property type="term" value="C:cytosol"/>
    <property type="evidence" value="ECO:0007669"/>
    <property type="project" value="TreeGrafter"/>
</dbReference>
<dbReference type="GO" id="GO:0000287">
    <property type="term" value="F:magnesium ion binding"/>
    <property type="evidence" value="ECO:0007669"/>
    <property type="project" value="UniProtKB-UniRule"/>
</dbReference>
<dbReference type="GO" id="GO:0008966">
    <property type="term" value="F:phosphoglucosamine mutase activity"/>
    <property type="evidence" value="ECO:0007669"/>
    <property type="project" value="UniProtKB-UniRule"/>
</dbReference>
<dbReference type="GO" id="GO:0004615">
    <property type="term" value="F:phosphomannomutase activity"/>
    <property type="evidence" value="ECO:0007669"/>
    <property type="project" value="TreeGrafter"/>
</dbReference>
<dbReference type="GO" id="GO:0005975">
    <property type="term" value="P:carbohydrate metabolic process"/>
    <property type="evidence" value="ECO:0007669"/>
    <property type="project" value="InterPro"/>
</dbReference>
<dbReference type="GO" id="GO:0009252">
    <property type="term" value="P:peptidoglycan biosynthetic process"/>
    <property type="evidence" value="ECO:0007669"/>
    <property type="project" value="TreeGrafter"/>
</dbReference>
<dbReference type="GO" id="GO:0006048">
    <property type="term" value="P:UDP-N-acetylglucosamine biosynthetic process"/>
    <property type="evidence" value="ECO:0007669"/>
    <property type="project" value="TreeGrafter"/>
</dbReference>
<dbReference type="CDD" id="cd05802">
    <property type="entry name" value="GlmM"/>
    <property type="match status" value="1"/>
</dbReference>
<dbReference type="FunFam" id="3.30.310.50:FF:000001">
    <property type="entry name" value="Phosphoglucosamine mutase"/>
    <property type="match status" value="1"/>
</dbReference>
<dbReference type="FunFam" id="3.40.120.10:FF:000001">
    <property type="entry name" value="Phosphoglucosamine mutase"/>
    <property type="match status" value="1"/>
</dbReference>
<dbReference type="FunFam" id="3.40.120.10:FF:000003">
    <property type="entry name" value="Phosphoglucosamine mutase"/>
    <property type="match status" value="1"/>
</dbReference>
<dbReference type="Gene3D" id="3.40.120.10">
    <property type="entry name" value="Alpha-D-Glucose-1,6-Bisphosphate, subunit A, domain 3"/>
    <property type="match status" value="3"/>
</dbReference>
<dbReference type="Gene3D" id="3.30.310.50">
    <property type="entry name" value="Alpha-D-phosphohexomutase, C-terminal domain"/>
    <property type="match status" value="1"/>
</dbReference>
<dbReference type="HAMAP" id="MF_01554_B">
    <property type="entry name" value="GlmM_B"/>
    <property type="match status" value="1"/>
</dbReference>
<dbReference type="InterPro" id="IPR005844">
    <property type="entry name" value="A-D-PHexomutase_a/b/a-I"/>
</dbReference>
<dbReference type="InterPro" id="IPR016055">
    <property type="entry name" value="A-D-PHexomutase_a/b/a-I/II/III"/>
</dbReference>
<dbReference type="InterPro" id="IPR005845">
    <property type="entry name" value="A-D-PHexomutase_a/b/a-II"/>
</dbReference>
<dbReference type="InterPro" id="IPR005846">
    <property type="entry name" value="A-D-PHexomutase_a/b/a-III"/>
</dbReference>
<dbReference type="InterPro" id="IPR005843">
    <property type="entry name" value="A-D-PHexomutase_C"/>
</dbReference>
<dbReference type="InterPro" id="IPR036900">
    <property type="entry name" value="A-D-PHexomutase_C_sf"/>
</dbReference>
<dbReference type="InterPro" id="IPR016066">
    <property type="entry name" value="A-D-PHexomutase_CS"/>
</dbReference>
<dbReference type="InterPro" id="IPR005841">
    <property type="entry name" value="Alpha-D-phosphohexomutase_SF"/>
</dbReference>
<dbReference type="InterPro" id="IPR006352">
    <property type="entry name" value="GlmM_bact"/>
</dbReference>
<dbReference type="InterPro" id="IPR050060">
    <property type="entry name" value="Phosphoglucosamine_mutase"/>
</dbReference>
<dbReference type="NCBIfam" id="TIGR01455">
    <property type="entry name" value="glmM"/>
    <property type="match status" value="1"/>
</dbReference>
<dbReference type="NCBIfam" id="NF008139">
    <property type="entry name" value="PRK10887.1"/>
    <property type="match status" value="1"/>
</dbReference>
<dbReference type="PANTHER" id="PTHR42946:SF1">
    <property type="entry name" value="PHOSPHOGLUCOMUTASE (ALPHA-D-GLUCOSE-1,6-BISPHOSPHATE-DEPENDENT)"/>
    <property type="match status" value="1"/>
</dbReference>
<dbReference type="PANTHER" id="PTHR42946">
    <property type="entry name" value="PHOSPHOHEXOSE MUTASE"/>
    <property type="match status" value="1"/>
</dbReference>
<dbReference type="Pfam" id="PF02878">
    <property type="entry name" value="PGM_PMM_I"/>
    <property type="match status" value="1"/>
</dbReference>
<dbReference type="Pfam" id="PF02879">
    <property type="entry name" value="PGM_PMM_II"/>
    <property type="match status" value="1"/>
</dbReference>
<dbReference type="Pfam" id="PF02880">
    <property type="entry name" value="PGM_PMM_III"/>
    <property type="match status" value="1"/>
</dbReference>
<dbReference type="Pfam" id="PF00408">
    <property type="entry name" value="PGM_PMM_IV"/>
    <property type="match status" value="1"/>
</dbReference>
<dbReference type="PRINTS" id="PR00509">
    <property type="entry name" value="PGMPMM"/>
</dbReference>
<dbReference type="SUPFAM" id="SSF55957">
    <property type="entry name" value="Phosphoglucomutase, C-terminal domain"/>
    <property type="match status" value="1"/>
</dbReference>
<dbReference type="SUPFAM" id="SSF53738">
    <property type="entry name" value="Phosphoglucomutase, first 3 domains"/>
    <property type="match status" value="3"/>
</dbReference>
<dbReference type="PROSITE" id="PS00710">
    <property type="entry name" value="PGM_PMM"/>
    <property type="match status" value="1"/>
</dbReference>
<keyword id="KW-0413">Isomerase</keyword>
<keyword id="KW-0460">Magnesium</keyword>
<keyword id="KW-0479">Metal-binding</keyword>
<keyword id="KW-0597">Phosphoprotein</keyword>
<keyword id="KW-1185">Reference proteome</keyword>
<accession>Q87WQ0</accession>
<comment type="function">
    <text evidence="1">Catalyzes the conversion of glucosamine-6-phosphate to glucosamine-1-phosphate.</text>
</comment>
<comment type="catalytic activity">
    <reaction evidence="1">
        <text>alpha-D-glucosamine 1-phosphate = D-glucosamine 6-phosphate</text>
        <dbReference type="Rhea" id="RHEA:23424"/>
        <dbReference type="ChEBI" id="CHEBI:58516"/>
        <dbReference type="ChEBI" id="CHEBI:58725"/>
        <dbReference type="EC" id="5.4.2.10"/>
    </reaction>
</comment>
<comment type="cofactor">
    <cofactor evidence="1">
        <name>Mg(2+)</name>
        <dbReference type="ChEBI" id="CHEBI:18420"/>
    </cofactor>
    <text evidence="1">Binds 1 Mg(2+) ion per subunit.</text>
</comment>
<comment type="PTM">
    <text evidence="1">Activated by phosphorylation.</text>
</comment>
<comment type="similarity">
    <text evidence="1">Belongs to the phosphohexose mutase family.</text>
</comment>
<evidence type="ECO:0000255" key="1">
    <source>
        <dbReference type="HAMAP-Rule" id="MF_01554"/>
    </source>
</evidence>
<feature type="chain" id="PRO_0000147943" description="Phosphoglucosamine mutase">
    <location>
        <begin position="1"/>
        <end position="447"/>
    </location>
</feature>
<feature type="active site" description="Phosphoserine intermediate" evidence="1">
    <location>
        <position position="102"/>
    </location>
</feature>
<feature type="binding site" description="via phosphate group" evidence="1">
    <location>
        <position position="102"/>
    </location>
    <ligand>
        <name>Mg(2+)</name>
        <dbReference type="ChEBI" id="CHEBI:18420"/>
    </ligand>
</feature>
<feature type="binding site" evidence="1">
    <location>
        <position position="241"/>
    </location>
    <ligand>
        <name>Mg(2+)</name>
        <dbReference type="ChEBI" id="CHEBI:18420"/>
    </ligand>
</feature>
<feature type="binding site" evidence="1">
    <location>
        <position position="243"/>
    </location>
    <ligand>
        <name>Mg(2+)</name>
        <dbReference type="ChEBI" id="CHEBI:18420"/>
    </ligand>
</feature>
<feature type="binding site" evidence="1">
    <location>
        <position position="245"/>
    </location>
    <ligand>
        <name>Mg(2+)</name>
        <dbReference type="ChEBI" id="CHEBI:18420"/>
    </ligand>
</feature>
<feature type="modified residue" description="Phosphoserine" evidence="1">
    <location>
        <position position="102"/>
    </location>
</feature>
<sequence>MTTRKYFGTDGIRGRVGQFPITPEFMLKLGWAAGMAFRKMGACRILVGKDTRISGYMFESALEAGLSAAGADVLLLGPMPTPAIAYLTRTFHAEAGIVISASHNPHYDNGIKFFSGQGTKLPDEIEMMIEELLDAPMTVAESENLGKVSRINDAAGRYIEFCKSSVPTSTDFAGLKVVIDCAHGATYKVAPNVFRELGAQVVVLSAQPDGLNINKDCGSTHMEALQAAVVAEHADMGIGFDGDGDRVLMVDHTGTIVDGDELLYIIARDLHERGRLQGGVVGTLMSNLGLELALAEQNIPFVRANVGDRYVIAELLERNWQIGGENSGHIVCFQHATTGDAIIASLQVILALRRSGISLAEARLKLRKCPQILINVRFEGSSVDPVTHPSVQEACARVTEQMAGRGRVLLRKSGTEPLVRVMVEGEDEAQVRAYAEELAKLVAEVCA</sequence>
<gene>
    <name evidence="1" type="primary">glmM</name>
    <name type="ordered locus">PSPTO_4495</name>
</gene>